<proteinExistence type="inferred from homology"/>
<sequence length="434" mass="45555">MAARRRHVAAGAGAPAPAAGEWAAVTAGGGAAWALSPVEEVGTKQELMRRTGLPPRDLRALDPALSSAASASSCRPSAITGRDRAVVVNLDRARAVITASEVLVPSPRDPAVAPLVRELRARLALAASPTPAPSPSPPQHGMAVGMDGSISPSQASRGGEEAAGNGKDGEALGGGDKALPFEFRALEVCLEFACKSLEHETCTLEKEAYPALDELTSKVSTLNLERVRQIKSRLVAISGKVQKVRDELEHLLDDDMDMAALHLTEKLAYQSSRFDIDKEASELEDHSSRDEEGVEGGGGGDGDDETIAGGGSFSPNTDELEILLESYFVQIDGTLNSLSTLREYVEDTEDYINMMLDEKQNQLLQMGILLSTGTLVSSCAIAVTGVFGINVHISLYDSPASSAAFPCAAAGIVAGSLALYLAALLCYKRAGILQ</sequence>
<dbReference type="EMBL" id="AL606458">
    <property type="protein sequence ID" value="CAE03029.1"/>
    <property type="molecule type" value="Genomic_DNA"/>
</dbReference>
<dbReference type="EMBL" id="AP008210">
    <property type="status" value="NOT_ANNOTATED_CDS"/>
    <property type="molecule type" value="Genomic_DNA"/>
</dbReference>
<dbReference type="EMBL" id="AP014960">
    <property type="status" value="NOT_ANNOTATED_CDS"/>
    <property type="molecule type" value="Genomic_DNA"/>
</dbReference>
<dbReference type="EMBL" id="CM000141">
    <property type="protein sequence ID" value="EEE61022.1"/>
    <property type="status" value="ALT_SEQ"/>
    <property type="molecule type" value="Genomic_DNA"/>
</dbReference>
<dbReference type="SMR" id="Q7XQQ1"/>
<dbReference type="FunCoup" id="Q7XQQ1">
    <property type="interactions" value="3"/>
</dbReference>
<dbReference type="PaxDb" id="39947-Q7XQQ1"/>
<dbReference type="eggNOG" id="KOG2662">
    <property type="taxonomic scope" value="Eukaryota"/>
</dbReference>
<dbReference type="HOGENOM" id="CLU_034694_0_0_1"/>
<dbReference type="InParanoid" id="Q7XQQ1"/>
<dbReference type="OrthoDB" id="677694at2759"/>
<dbReference type="Proteomes" id="UP000000763">
    <property type="component" value="Chromosome 4"/>
</dbReference>
<dbReference type="Proteomes" id="UP000007752">
    <property type="component" value="Chromosome 4"/>
</dbReference>
<dbReference type="Proteomes" id="UP000059680">
    <property type="component" value="Chromosome 4"/>
</dbReference>
<dbReference type="GO" id="GO:0016020">
    <property type="term" value="C:membrane"/>
    <property type="evidence" value="ECO:0007669"/>
    <property type="project" value="UniProtKB-SubCell"/>
</dbReference>
<dbReference type="GO" id="GO:0015095">
    <property type="term" value="F:magnesium ion transmembrane transporter activity"/>
    <property type="evidence" value="ECO:0000318"/>
    <property type="project" value="GO_Central"/>
</dbReference>
<dbReference type="GO" id="GO:0015693">
    <property type="term" value="P:magnesium ion transport"/>
    <property type="evidence" value="ECO:0000318"/>
    <property type="project" value="GO_Central"/>
</dbReference>
<dbReference type="CDD" id="cd12823">
    <property type="entry name" value="Mrs2_Mfm1p-like"/>
    <property type="match status" value="1"/>
</dbReference>
<dbReference type="FunFam" id="2.40.128.330:FF:000007">
    <property type="entry name" value="Putative magnesium transporter MRS2-D"/>
    <property type="match status" value="1"/>
</dbReference>
<dbReference type="Gene3D" id="2.40.128.330">
    <property type="match status" value="1"/>
</dbReference>
<dbReference type="Gene3D" id="1.20.58.340">
    <property type="entry name" value="Magnesium transport protein CorA, transmembrane region"/>
    <property type="match status" value="1"/>
</dbReference>
<dbReference type="InterPro" id="IPR039204">
    <property type="entry name" value="MRS2-like"/>
</dbReference>
<dbReference type="PANTHER" id="PTHR13890:SF7">
    <property type="entry name" value="MAGNESIUM TRANSPORTER MRS2-D-RELATED"/>
    <property type="match status" value="1"/>
</dbReference>
<dbReference type="PANTHER" id="PTHR13890">
    <property type="entry name" value="RNA SPLICING PROTEIN MRS2, MITOCHONDRIAL"/>
    <property type="match status" value="1"/>
</dbReference>
<dbReference type="Pfam" id="PF22099">
    <property type="entry name" value="MRS2-like"/>
    <property type="match status" value="3"/>
</dbReference>
<evidence type="ECO:0000250" key="1"/>
<evidence type="ECO:0000255" key="2"/>
<evidence type="ECO:0000256" key="3">
    <source>
        <dbReference type="SAM" id="MobiDB-lite"/>
    </source>
</evidence>
<evidence type="ECO:0000305" key="4"/>
<gene>
    <name type="primary">MRS2-D</name>
    <name type="ordered locus">Os04g0430900</name>
    <name type="ordered locus">LOC_Os04g35160</name>
    <name type="ORF">OsJ_14848</name>
    <name type="ORF">OSJNBa0084A10.4</name>
</gene>
<keyword id="KW-0406">Ion transport</keyword>
<keyword id="KW-0460">Magnesium</keyword>
<keyword id="KW-0472">Membrane</keyword>
<keyword id="KW-1185">Reference proteome</keyword>
<keyword id="KW-0812">Transmembrane</keyword>
<keyword id="KW-1133">Transmembrane helix</keyword>
<keyword id="KW-0813">Transport</keyword>
<reference key="1">
    <citation type="journal article" date="2002" name="Nature">
        <title>Sequence and analysis of rice chromosome 4.</title>
        <authorList>
            <person name="Feng Q."/>
            <person name="Zhang Y."/>
            <person name="Hao P."/>
            <person name="Wang S."/>
            <person name="Fu G."/>
            <person name="Huang Y."/>
            <person name="Li Y."/>
            <person name="Zhu J."/>
            <person name="Liu Y."/>
            <person name="Hu X."/>
            <person name="Jia P."/>
            <person name="Zhang Y."/>
            <person name="Zhao Q."/>
            <person name="Ying K."/>
            <person name="Yu S."/>
            <person name="Tang Y."/>
            <person name="Weng Q."/>
            <person name="Zhang L."/>
            <person name="Lu Y."/>
            <person name="Mu J."/>
            <person name="Lu Y."/>
            <person name="Zhang L.S."/>
            <person name="Yu Z."/>
            <person name="Fan D."/>
            <person name="Liu X."/>
            <person name="Lu T."/>
            <person name="Li C."/>
            <person name="Wu Y."/>
            <person name="Sun T."/>
            <person name="Lei H."/>
            <person name="Li T."/>
            <person name="Hu H."/>
            <person name="Guan J."/>
            <person name="Wu M."/>
            <person name="Zhang R."/>
            <person name="Zhou B."/>
            <person name="Chen Z."/>
            <person name="Chen L."/>
            <person name="Jin Z."/>
            <person name="Wang R."/>
            <person name="Yin H."/>
            <person name="Cai Z."/>
            <person name="Ren S."/>
            <person name="Lv G."/>
            <person name="Gu W."/>
            <person name="Zhu G."/>
            <person name="Tu Y."/>
            <person name="Jia J."/>
            <person name="Zhang Y."/>
            <person name="Chen J."/>
            <person name="Kang H."/>
            <person name="Chen X."/>
            <person name="Shao C."/>
            <person name="Sun Y."/>
            <person name="Hu Q."/>
            <person name="Zhang X."/>
            <person name="Zhang W."/>
            <person name="Wang L."/>
            <person name="Ding C."/>
            <person name="Sheng H."/>
            <person name="Gu J."/>
            <person name="Chen S."/>
            <person name="Ni L."/>
            <person name="Zhu F."/>
            <person name="Chen W."/>
            <person name="Lan L."/>
            <person name="Lai Y."/>
            <person name="Cheng Z."/>
            <person name="Gu M."/>
            <person name="Jiang J."/>
            <person name="Li J."/>
            <person name="Hong G."/>
            <person name="Xue Y."/>
            <person name="Han B."/>
        </authorList>
    </citation>
    <scope>NUCLEOTIDE SEQUENCE [LARGE SCALE GENOMIC DNA]</scope>
    <source>
        <strain>cv. Nipponbare</strain>
    </source>
</reference>
<reference key="2">
    <citation type="journal article" date="2005" name="Nature">
        <title>The map-based sequence of the rice genome.</title>
        <authorList>
            <consortium name="International rice genome sequencing project (IRGSP)"/>
        </authorList>
    </citation>
    <scope>NUCLEOTIDE SEQUENCE [LARGE SCALE GENOMIC DNA]</scope>
    <source>
        <strain>cv. Nipponbare</strain>
    </source>
</reference>
<reference key="3">
    <citation type="journal article" date="2008" name="Nucleic Acids Res.">
        <title>The rice annotation project database (RAP-DB): 2008 update.</title>
        <authorList>
            <consortium name="The rice annotation project (RAP)"/>
        </authorList>
    </citation>
    <scope>GENOME REANNOTATION</scope>
    <source>
        <strain>cv. Nipponbare</strain>
    </source>
</reference>
<reference key="4">
    <citation type="journal article" date="2013" name="Rice">
        <title>Improvement of the Oryza sativa Nipponbare reference genome using next generation sequence and optical map data.</title>
        <authorList>
            <person name="Kawahara Y."/>
            <person name="de la Bastide M."/>
            <person name="Hamilton J.P."/>
            <person name="Kanamori H."/>
            <person name="McCombie W.R."/>
            <person name="Ouyang S."/>
            <person name="Schwartz D.C."/>
            <person name="Tanaka T."/>
            <person name="Wu J."/>
            <person name="Zhou S."/>
            <person name="Childs K.L."/>
            <person name="Davidson R.M."/>
            <person name="Lin H."/>
            <person name="Quesada-Ocampo L."/>
            <person name="Vaillancourt B."/>
            <person name="Sakai H."/>
            <person name="Lee S.S."/>
            <person name="Kim J."/>
            <person name="Numa H."/>
            <person name="Itoh T."/>
            <person name="Buell C.R."/>
            <person name="Matsumoto T."/>
        </authorList>
    </citation>
    <scope>GENOME REANNOTATION</scope>
    <source>
        <strain>cv. Nipponbare</strain>
    </source>
</reference>
<reference key="5">
    <citation type="journal article" date="2005" name="PLoS Biol.">
        <title>The genomes of Oryza sativa: a history of duplications.</title>
        <authorList>
            <person name="Yu J."/>
            <person name="Wang J."/>
            <person name="Lin W."/>
            <person name="Li S."/>
            <person name="Li H."/>
            <person name="Zhou J."/>
            <person name="Ni P."/>
            <person name="Dong W."/>
            <person name="Hu S."/>
            <person name="Zeng C."/>
            <person name="Zhang J."/>
            <person name="Zhang Y."/>
            <person name="Li R."/>
            <person name="Xu Z."/>
            <person name="Li S."/>
            <person name="Li X."/>
            <person name="Zheng H."/>
            <person name="Cong L."/>
            <person name="Lin L."/>
            <person name="Yin J."/>
            <person name="Geng J."/>
            <person name="Li G."/>
            <person name="Shi J."/>
            <person name="Liu J."/>
            <person name="Lv H."/>
            <person name="Li J."/>
            <person name="Wang J."/>
            <person name="Deng Y."/>
            <person name="Ran L."/>
            <person name="Shi X."/>
            <person name="Wang X."/>
            <person name="Wu Q."/>
            <person name="Li C."/>
            <person name="Ren X."/>
            <person name="Wang J."/>
            <person name="Wang X."/>
            <person name="Li D."/>
            <person name="Liu D."/>
            <person name="Zhang X."/>
            <person name="Ji Z."/>
            <person name="Zhao W."/>
            <person name="Sun Y."/>
            <person name="Zhang Z."/>
            <person name="Bao J."/>
            <person name="Han Y."/>
            <person name="Dong L."/>
            <person name="Ji J."/>
            <person name="Chen P."/>
            <person name="Wu S."/>
            <person name="Liu J."/>
            <person name="Xiao Y."/>
            <person name="Bu D."/>
            <person name="Tan J."/>
            <person name="Yang L."/>
            <person name="Ye C."/>
            <person name="Zhang J."/>
            <person name="Xu J."/>
            <person name="Zhou Y."/>
            <person name="Yu Y."/>
            <person name="Zhang B."/>
            <person name="Zhuang S."/>
            <person name="Wei H."/>
            <person name="Liu B."/>
            <person name="Lei M."/>
            <person name="Yu H."/>
            <person name="Li Y."/>
            <person name="Xu H."/>
            <person name="Wei S."/>
            <person name="He X."/>
            <person name="Fang L."/>
            <person name="Zhang Z."/>
            <person name="Zhang Y."/>
            <person name="Huang X."/>
            <person name="Su Z."/>
            <person name="Tong W."/>
            <person name="Li J."/>
            <person name="Tong Z."/>
            <person name="Li S."/>
            <person name="Ye J."/>
            <person name="Wang L."/>
            <person name="Fang L."/>
            <person name="Lei T."/>
            <person name="Chen C.-S."/>
            <person name="Chen H.-C."/>
            <person name="Xu Z."/>
            <person name="Li H."/>
            <person name="Huang H."/>
            <person name="Zhang F."/>
            <person name="Xu H."/>
            <person name="Li N."/>
            <person name="Zhao C."/>
            <person name="Li S."/>
            <person name="Dong L."/>
            <person name="Huang Y."/>
            <person name="Li L."/>
            <person name="Xi Y."/>
            <person name="Qi Q."/>
            <person name="Li W."/>
            <person name="Zhang B."/>
            <person name="Hu W."/>
            <person name="Zhang Y."/>
            <person name="Tian X."/>
            <person name="Jiao Y."/>
            <person name="Liang X."/>
            <person name="Jin J."/>
            <person name="Gao L."/>
            <person name="Zheng W."/>
            <person name="Hao B."/>
            <person name="Liu S.-M."/>
            <person name="Wang W."/>
            <person name="Yuan L."/>
            <person name="Cao M."/>
            <person name="McDermott J."/>
            <person name="Samudrala R."/>
            <person name="Wang J."/>
            <person name="Wong G.K.-S."/>
            <person name="Yang H."/>
        </authorList>
    </citation>
    <scope>NUCLEOTIDE SEQUENCE [LARGE SCALE GENOMIC DNA]</scope>
    <source>
        <strain>cv. Nipponbare</strain>
    </source>
</reference>
<reference key="6">
    <citation type="journal article" date="2009" name="Plant Cell">
        <title>A root-expressed magnesium transporter of the MRS2/MGT gene family in Arabidopsis thaliana allows for growth in low-Mg2+ environments.</title>
        <authorList>
            <person name="Gebert M."/>
            <person name="Meschenmoser K."/>
            <person name="Svidova S."/>
            <person name="Weghuber J."/>
            <person name="Schweyen R."/>
            <person name="Eifler K."/>
            <person name="Lenz H."/>
            <person name="Weyand K."/>
            <person name="Knoop V."/>
        </authorList>
    </citation>
    <scope>GENE FAMILY</scope>
</reference>
<accession>Q7XQQ1</accession>
<accession>B9FF88</accession>
<comment type="function">
    <text evidence="1">Putative magnesium transporter.</text>
</comment>
<comment type="subcellular location">
    <subcellularLocation>
        <location evidence="1">Membrane</location>
        <topology evidence="1">Multi-pass membrane protein</topology>
    </subcellularLocation>
</comment>
<comment type="similarity">
    <text evidence="4">Belongs to the CorA metal ion transporter (MIT) (TC 1.A.35.5) family.</text>
</comment>
<comment type="caution">
    <text evidence="4">Lacks the GMN motif, which is a conserved feature of the family.</text>
</comment>
<comment type="sequence caution" evidence="4">
    <conflict type="erroneous gene model prediction">
        <sequence resource="EMBL-CDS" id="EEE61022"/>
    </conflict>
</comment>
<protein>
    <recommendedName>
        <fullName>Putative magnesium transporter MRS2-D</fullName>
    </recommendedName>
</protein>
<name>MRS2D_ORYSJ</name>
<feature type="chain" id="PRO_0000394271" description="Putative magnesium transporter MRS2-D">
    <location>
        <begin position="1"/>
        <end position="434"/>
    </location>
</feature>
<feature type="transmembrane region" description="Helical" evidence="2">
    <location>
        <begin position="367"/>
        <end position="387"/>
    </location>
</feature>
<feature type="transmembrane region" description="Helical" evidence="2">
    <location>
        <begin position="405"/>
        <end position="425"/>
    </location>
</feature>
<feature type="region of interest" description="Disordered" evidence="3">
    <location>
        <begin position="126"/>
        <end position="171"/>
    </location>
</feature>
<feature type="region of interest" description="Disordered" evidence="3">
    <location>
        <begin position="279"/>
        <end position="311"/>
    </location>
</feature>
<feature type="compositionally biased region" description="Basic and acidic residues" evidence="3">
    <location>
        <begin position="279"/>
        <end position="291"/>
    </location>
</feature>
<organism>
    <name type="scientific">Oryza sativa subsp. japonica</name>
    <name type="common">Rice</name>
    <dbReference type="NCBI Taxonomy" id="39947"/>
    <lineage>
        <taxon>Eukaryota</taxon>
        <taxon>Viridiplantae</taxon>
        <taxon>Streptophyta</taxon>
        <taxon>Embryophyta</taxon>
        <taxon>Tracheophyta</taxon>
        <taxon>Spermatophyta</taxon>
        <taxon>Magnoliopsida</taxon>
        <taxon>Liliopsida</taxon>
        <taxon>Poales</taxon>
        <taxon>Poaceae</taxon>
        <taxon>BOP clade</taxon>
        <taxon>Oryzoideae</taxon>
        <taxon>Oryzeae</taxon>
        <taxon>Oryzinae</taxon>
        <taxon>Oryza</taxon>
        <taxon>Oryza sativa</taxon>
    </lineage>
</organism>